<keyword id="KW-0143">Chaperone</keyword>
<keyword id="KW-0963">Cytoplasm</keyword>
<keyword id="KW-0539">Nucleus</keyword>
<keyword id="KW-1185">Reference proteome</keyword>
<comment type="function">
    <text evidence="1">Forms a chaperone-bound H2A.Z-H2B complex that acts as a source for SWR1 complex-dependent H2A to H2A.Z histone replacement in chromatin.</text>
</comment>
<comment type="subunit">
    <text evidence="1">Forms a heterotrimer with H2A.Z-H2B, stabilizing the association of the histone dimer.</text>
</comment>
<comment type="subcellular location">
    <subcellularLocation>
        <location evidence="3">Cytoplasm</location>
    </subcellularLocation>
    <subcellularLocation>
        <location evidence="3">Nucleus</location>
    </subcellularLocation>
</comment>
<comment type="similarity">
    <text evidence="4">Belongs to the CHZ1 family.</text>
</comment>
<evidence type="ECO:0000250" key="1"/>
<evidence type="ECO:0000256" key="2">
    <source>
        <dbReference type="SAM" id="MobiDB-lite"/>
    </source>
</evidence>
<evidence type="ECO:0000269" key="3">
    <source>
    </source>
</evidence>
<evidence type="ECO:0000305" key="4"/>
<organism>
    <name type="scientific">Schizosaccharomyces pombe (strain 972 / ATCC 24843)</name>
    <name type="common">Fission yeast</name>
    <dbReference type="NCBI Taxonomy" id="284812"/>
    <lineage>
        <taxon>Eukaryota</taxon>
        <taxon>Fungi</taxon>
        <taxon>Dikarya</taxon>
        <taxon>Ascomycota</taxon>
        <taxon>Taphrinomycotina</taxon>
        <taxon>Schizosaccharomycetes</taxon>
        <taxon>Schizosaccharomycetales</taxon>
        <taxon>Schizosaccharomycetaceae</taxon>
        <taxon>Schizosaccharomyces</taxon>
    </lineage>
</organism>
<reference key="1">
    <citation type="journal article" date="2002" name="Nature">
        <title>The genome sequence of Schizosaccharomyces pombe.</title>
        <authorList>
            <person name="Wood V."/>
            <person name="Gwilliam R."/>
            <person name="Rajandream M.A."/>
            <person name="Lyne M.H."/>
            <person name="Lyne R."/>
            <person name="Stewart A."/>
            <person name="Sgouros J.G."/>
            <person name="Peat N."/>
            <person name="Hayles J."/>
            <person name="Baker S.G."/>
            <person name="Basham D."/>
            <person name="Bowman S."/>
            <person name="Brooks K."/>
            <person name="Brown D."/>
            <person name="Brown S."/>
            <person name="Chillingworth T."/>
            <person name="Churcher C.M."/>
            <person name="Collins M."/>
            <person name="Connor R."/>
            <person name="Cronin A."/>
            <person name="Davis P."/>
            <person name="Feltwell T."/>
            <person name="Fraser A."/>
            <person name="Gentles S."/>
            <person name="Goble A."/>
            <person name="Hamlin N."/>
            <person name="Harris D.E."/>
            <person name="Hidalgo J."/>
            <person name="Hodgson G."/>
            <person name="Holroyd S."/>
            <person name="Hornsby T."/>
            <person name="Howarth S."/>
            <person name="Huckle E.J."/>
            <person name="Hunt S."/>
            <person name="Jagels K."/>
            <person name="James K.D."/>
            <person name="Jones L."/>
            <person name="Jones M."/>
            <person name="Leather S."/>
            <person name="McDonald S."/>
            <person name="McLean J."/>
            <person name="Mooney P."/>
            <person name="Moule S."/>
            <person name="Mungall K.L."/>
            <person name="Murphy L.D."/>
            <person name="Niblett D."/>
            <person name="Odell C."/>
            <person name="Oliver K."/>
            <person name="O'Neil S."/>
            <person name="Pearson D."/>
            <person name="Quail M.A."/>
            <person name="Rabbinowitsch E."/>
            <person name="Rutherford K.M."/>
            <person name="Rutter S."/>
            <person name="Saunders D."/>
            <person name="Seeger K."/>
            <person name="Sharp S."/>
            <person name="Skelton J."/>
            <person name="Simmonds M.N."/>
            <person name="Squares R."/>
            <person name="Squares S."/>
            <person name="Stevens K."/>
            <person name="Taylor K."/>
            <person name="Taylor R.G."/>
            <person name="Tivey A."/>
            <person name="Walsh S.V."/>
            <person name="Warren T."/>
            <person name="Whitehead S."/>
            <person name="Woodward J.R."/>
            <person name="Volckaert G."/>
            <person name="Aert R."/>
            <person name="Robben J."/>
            <person name="Grymonprez B."/>
            <person name="Weltjens I."/>
            <person name="Vanstreels E."/>
            <person name="Rieger M."/>
            <person name="Schaefer M."/>
            <person name="Mueller-Auer S."/>
            <person name="Gabel C."/>
            <person name="Fuchs M."/>
            <person name="Duesterhoeft A."/>
            <person name="Fritzc C."/>
            <person name="Holzer E."/>
            <person name="Moestl D."/>
            <person name="Hilbert H."/>
            <person name="Borzym K."/>
            <person name="Langer I."/>
            <person name="Beck A."/>
            <person name="Lehrach H."/>
            <person name="Reinhardt R."/>
            <person name="Pohl T.M."/>
            <person name="Eger P."/>
            <person name="Zimmermann W."/>
            <person name="Wedler H."/>
            <person name="Wambutt R."/>
            <person name="Purnelle B."/>
            <person name="Goffeau A."/>
            <person name="Cadieu E."/>
            <person name="Dreano S."/>
            <person name="Gloux S."/>
            <person name="Lelaure V."/>
            <person name="Mottier S."/>
            <person name="Galibert F."/>
            <person name="Aves S.J."/>
            <person name="Xiang Z."/>
            <person name="Hunt C."/>
            <person name="Moore K."/>
            <person name="Hurst S.M."/>
            <person name="Lucas M."/>
            <person name="Rochet M."/>
            <person name="Gaillardin C."/>
            <person name="Tallada V.A."/>
            <person name="Garzon A."/>
            <person name="Thode G."/>
            <person name="Daga R.R."/>
            <person name="Cruzado L."/>
            <person name="Jimenez J."/>
            <person name="Sanchez M."/>
            <person name="del Rey F."/>
            <person name="Benito J."/>
            <person name="Dominguez A."/>
            <person name="Revuelta J.L."/>
            <person name="Moreno S."/>
            <person name="Armstrong J."/>
            <person name="Forsburg S.L."/>
            <person name="Cerutti L."/>
            <person name="Lowe T."/>
            <person name="McCombie W.R."/>
            <person name="Paulsen I."/>
            <person name="Potashkin J."/>
            <person name="Shpakovski G.V."/>
            <person name="Ussery D."/>
            <person name="Barrell B.G."/>
            <person name="Nurse P."/>
        </authorList>
    </citation>
    <scope>NUCLEOTIDE SEQUENCE [LARGE SCALE GENOMIC DNA]</scope>
    <source>
        <strain>972 / ATCC 24843</strain>
    </source>
</reference>
<reference key="2">
    <citation type="journal article" date="2006" name="Nat. Biotechnol.">
        <title>ORFeome cloning and global analysis of protein localization in the fission yeast Schizosaccharomyces pombe.</title>
        <authorList>
            <person name="Matsuyama A."/>
            <person name="Arai R."/>
            <person name="Yashiroda Y."/>
            <person name="Shirai A."/>
            <person name="Kamata A."/>
            <person name="Sekido S."/>
            <person name="Kobayashi Y."/>
            <person name="Hashimoto A."/>
            <person name="Hamamoto M."/>
            <person name="Hiraoka Y."/>
            <person name="Horinouchi S."/>
            <person name="Yoshida M."/>
        </authorList>
    </citation>
    <scope>SUBCELLULAR LOCATION [LARGE SCALE ANALYSIS]</scope>
</reference>
<dbReference type="EMBL" id="CU329670">
    <property type="protein sequence ID" value="CAA93556.1"/>
    <property type="molecule type" value="Genomic_DNA"/>
</dbReference>
<dbReference type="PIR" id="T38865">
    <property type="entry name" value="T38865"/>
</dbReference>
<dbReference type="RefSeq" id="NP_593688.1">
    <property type="nucleotide sequence ID" value="NM_001019120.2"/>
</dbReference>
<dbReference type="SMR" id="Q10239"/>
<dbReference type="BioGRID" id="279826">
    <property type="interactions" value="1"/>
</dbReference>
<dbReference type="STRING" id="284812.Q10239"/>
<dbReference type="iPTMnet" id="Q10239"/>
<dbReference type="PaxDb" id="4896-SPAC4G9.06c.1"/>
<dbReference type="EnsemblFungi" id="SPAC4G9.06c.1">
    <property type="protein sequence ID" value="SPAC4G9.06c.1:pep"/>
    <property type="gene ID" value="SPAC4G9.06c"/>
</dbReference>
<dbReference type="GeneID" id="2543404"/>
<dbReference type="KEGG" id="spo:2543404"/>
<dbReference type="PomBase" id="SPAC4G9.06c">
    <property type="gene designation" value="chz1"/>
</dbReference>
<dbReference type="VEuPathDB" id="FungiDB:SPAC4G9.06c"/>
<dbReference type="HOGENOM" id="CLU_2185475_0_0_1"/>
<dbReference type="InParanoid" id="Q10239"/>
<dbReference type="OMA" id="IMCSTRT"/>
<dbReference type="PRO" id="PR:Q10239"/>
<dbReference type="Proteomes" id="UP000002485">
    <property type="component" value="Chromosome I"/>
</dbReference>
<dbReference type="GO" id="GO:0000785">
    <property type="term" value="C:chromatin"/>
    <property type="evidence" value="ECO:0000305"/>
    <property type="project" value="PomBase"/>
</dbReference>
<dbReference type="GO" id="GO:0005829">
    <property type="term" value="C:cytosol"/>
    <property type="evidence" value="ECO:0007005"/>
    <property type="project" value="PomBase"/>
</dbReference>
<dbReference type="GO" id="GO:0005634">
    <property type="term" value="C:nucleus"/>
    <property type="evidence" value="ECO:0007005"/>
    <property type="project" value="PomBase"/>
</dbReference>
<dbReference type="GO" id="GO:0000511">
    <property type="term" value="F:H2A-H2B histone complex chaperone activity"/>
    <property type="evidence" value="ECO:0000303"/>
    <property type="project" value="PomBase"/>
</dbReference>
<dbReference type="GO" id="GO:0006338">
    <property type="term" value="P:chromatin remodeling"/>
    <property type="evidence" value="ECO:0000303"/>
    <property type="project" value="PomBase"/>
</dbReference>
<dbReference type="InterPro" id="IPR019098">
    <property type="entry name" value="Histone_chaperone_domain_CHZ"/>
</dbReference>
<dbReference type="Pfam" id="PF09649">
    <property type="entry name" value="CHZ"/>
    <property type="match status" value="1"/>
</dbReference>
<dbReference type="SMART" id="SM01082">
    <property type="entry name" value="CHZ"/>
    <property type="match status" value="1"/>
</dbReference>
<sequence>MSEEPKKIDIKGKGRAIEDLIPDIDDEEDDVDFQDLSSSGESDDSDDSMQEDYDDIHDEEPEDYSAIDPTNIMCSTRTRRKKIDFTKVLEEGQNEDDFEEEDEDYIPPQDKTM</sequence>
<accession>Q10239</accession>
<gene>
    <name type="primary">chz1</name>
    <name type="ORF">SPAC4G9.06c</name>
</gene>
<feature type="chain" id="PRO_0000116565" description="Histone H2A.Z-specific chaperone chz1">
    <location>
        <begin position="1"/>
        <end position="113"/>
    </location>
</feature>
<feature type="region of interest" description="Disordered" evidence="2">
    <location>
        <begin position="1"/>
        <end position="71"/>
    </location>
</feature>
<feature type="region of interest" description="Disordered" evidence="2">
    <location>
        <begin position="83"/>
        <end position="113"/>
    </location>
</feature>
<feature type="compositionally biased region" description="Basic and acidic residues" evidence="2">
    <location>
        <begin position="1"/>
        <end position="18"/>
    </location>
</feature>
<feature type="compositionally biased region" description="Acidic residues" evidence="2">
    <location>
        <begin position="20"/>
        <end position="33"/>
    </location>
</feature>
<feature type="compositionally biased region" description="Acidic residues" evidence="2">
    <location>
        <begin position="41"/>
        <end position="65"/>
    </location>
</feature>
<feature type="compositionally biased region" description="Acidic residues" evidence="2">
    <location>
        <begin position="92"/>
        <end position="105"/>
    </location>
</feature>
<proteinExistence type="inferred from homology"/>
<name>CHZ1_SCHPO</name>
<protein>
    <recommendedName>
        <fullName>Histone H2A.Z-specific chaperone chz1</fullName>
    </recommendedName>
</protein>